<gene>
    <name type="primary">B</name>
</gene>
<proteinExistence type="inferred from homology"/>
<comment type="function">
    <text evidence="1">Participates in the assembly of the viral procapsid in the cytoplasm. Forms first a 12S pre-assembly complex with protein H, and F and G pentamers, then twelve 12S complexes are joined by the D protein to form the procapsid. Internal scaffold protein B is released from the procapsid upon genome packaging. Autoproteolytic activity cleaves protein B and probably facilitates its removal through the pores of the procapsid.</text>
</comment>
<comment type="subunit">
    <text evidence="1">Component of the procapsid complex composed of 60 copies of the internally located B, 240 copies of the external scaffolding protein D, 60 copies of each of the viral structural proteins F and G proteins, and 12 copies of H.</text>
</comment>
<comment type="subcellular location">
    <subcellularLocation>
        <location evidence="1">Host cytoplasm</location>
    </subcellularLocation>
</comment>
<comment type="PTM">
    <text evidence="1">The proteolytic cleavage of the internal scaffolding protein B releases the scaffold protein in order to continue virion assembly.</text>
</comment>
<comment type="similarity">
    <text evidence="3">Belongs to the microviridae B protein family.</text>
</comment>
<organismHost>
    <name type="scientific">Escherichia coli</name>
    <dbReference type="NCBI Taxonomy" id="562"/>
</organismHost>
<organism>
    <name type="scientific">Escherichia phage alpha3</name>
    <name type="common">Bacteriophage alpha-3</name>
    <dbReference type="NCBI Taxonomy" id="10849"/>
    <lineage>
        <taxon>Viruses</taxon>
        <taxon>Monodnaviria</taxon>
        <taxon>Sangervirae</taxon>
        <taxon>Phixviricota</taxon>
        <taxon>Malgrandaviricetes</taxon>
        <taxon>Petitvirales</taxon>
        <taxon>Microviridae</taxon>
        <taxon>Bullavirinae</taxon>
        <taxon>Alphatrevirus</taxon>
        <taxon>Alphatrevirus alpha3</taxon>
    </lineage>
</organism>
<sequence length="117" mass="13335">MQESINGNLSEERISGTQQSETRNGAPVNGSSEQQGTSGTEPNQLRFQSSVSDSERERQKAIDLEHRRAAFARHFGCAPGSEKHVENYSSFDEKDTRVQLAEFYRFNDGHFKKWGYF</sequence>
<dbReference type="EC" id="3.4.-.-" evidence="1"/>
<dbReference type="EMBL" id="X60322">
    <property type="protein sequence ID" value="CAA42875.1"/>
    <property type="molecule type" value="Genomic_DNA"/>
</dbReference>
<dbReference type="PIR" id="S22325">
    <property type="entry name" value="S22325"/>
</dbReference>
<dbReference type="RefSeq" id="NP_039591.1">
    <property type="nucleotide sequence ID" value="NC_001330.1"/>
</dbReference>
<dbReference type="GeneID" id="1260691"/>
<dbReference type="KEGG" id="vg:1260691"/>
<dbReference type="OrthoDB" id="18148at10239"/>
<dbReference type="Proteomes" id="UP000002137">
    <property type="component" value="Genome"/>
</dbReference>
<dbReference type="GO" id="GO:0030430">
    <property type="term" value="C:host cell cytoplasm"/>
    <property type="evidence" value="ECO:0007669"/>
    <property type="project" value="UniProtKB-SubCell"/>
</dbReference>
<dbReference type="GO" id="GO:0008233">
    <property type="term" value="F:peptidase activity"/>
    <property type="evidence" value="ECO:0007669"/>
    <property type="project" value="UniProtKB-KW"/>
</dbReference>
<dbReference type="GO" id="GO:0006508">
    <property type="term" value="P:proteolysis"/>
    <property type="evidence" value="ECO:0007669"/>
    <property type="project" value="UniProtKB-KW"/>
</dbReference>
<dbReference type="GO" id="GO:0019069">
    <property type="term" value="P:viral capsid assembly"/>
    <property type="evidence" value="ECO:0007669"/>
    <property type="project" value="InterPro"/>
</dbReference>
<dbReference type="Gene3D" id="4.10.1260.10">
    <property type="entry name" value="Scaffolding protein gpD of bacteriophage procapsid"/>
    <property type="match status" value="1"/>
</dbReference>
<dbReference type="InterPro" id="IPR003513">
    <property type="entry name" value="Phage_B"/>
</dbReference>
<dbReference type="InterPro" id="IPR038149">
    <property type="entry name" value="Phage_B_sf"/>
</dbReference>
<dbReference type="Pfam" id="PF02304">
    <property type="entry name" value="Phage_B"/>
    <property type="match status" value="1"/>
</dbReference>
<protein>
    <recommendedName>
        <fullName>Internal scaffolding protein B</fullName>
        <ecNumber evidence="1">3.4.-.-</ecNumber>
    </recommendedName>
    <alternativeName>
        <fullName>Scaffolding protein B</fullName>
        <shortName>GPB</shortName>
    </alternativeName>
</protein>
<evidence type="ECO:0000250" key="1">
    <source>
        <dbReference type="UniProtKB" id="P03633"/>
    </source>
</evidence>
<evidence type="ECO:0000256" key="2">
    <source>
        <dbReference type="SAM" id="MobiDB-lite"/>
    </source>
</evidence>
<evidence type="ECO:0000305" key="3"/>
<reference key="1">
    <citation type="journal article" date="1992" name="Biochim. Biophys. Acta">
        <title>Nucleotide sequence of the genome of the bacteriophage alpha 3: interrelationship of the genome structure and the gene products with those of the phages, phi X174, G4 and phi K.</title>
        <authorList>
            <person name="Kodaira K."/>
            <person name="Nakano K."/>
            <person name="Okada S."/>
            <person name="Taketo A."/>
        </authorList>
    </citation>
    <scope>NUCLEOTIDE SEQUENCE [GENOMIC DNA]</scope>
</reference>
<keyword id="KW-0068">Autocatalytic cleavage</keyword>
<keyword id="KW-1035">Host cytoplasm</keyword>
<keyword id="KW-0378">Hydrolase</keyword>
<keyword id="KW-0645">Protease</keyword>
<keyword id="KW-1185">Reference proteome</keyword>
<keyword id="KW-0118">Viral capsid assembly</keyword>
<keyword id="KW-1188">Viral release from host cell</keyword>
<feature type="chain" id="PRO_0000164867" description="Internal scaffolding protein B">
    <location>
        <begin position="1"/>
        <end position="117"/>
    </location>
</feature>
<feature type="region of interest" description="Disordered" evidence="2">
    <location>
        <begin position="1"/>
        <end position="60"/>
    </location>
</feature>
<feature type="compositionally biased region" description="Polar residues" evidence="2">
    <location>
        <begin position="1"/>
        <end position="52"/>
    </location>
</feature>
<feature type="site" description="Cleavage; by autolysis" evidence="1">
    <location>
        <begin position="74"/>
        <end position="75"/>
    </location>
</feature>
<feature type="site" description="Cleavage; by autolysis" evidence="1">
    <location>
        <begin position="90"/>
        <end position="91"/>
    </location>
</feature>
<feature type="site" description="Cleavage; by autolysis" evidence="1">
    <location>
        <begin position="105"/>
        <end position="106"/>
    </location>
</feature>
<accession>P31278</accession>
<name>SCAFB_BPAL3</name>